<dbReference type="EMBL" id="CP000859">
    <property type="protein sequence ID" value="ABW68497.1"/>
    <property type="molecule type" value="Genomic_DNA"/>
</dbReference>
<dbReference type="RefSeq" id="WP_012176108.1">
    <property type="nucleotide sequence ID" value="NC_009943.1"/>
</dbReference>
<dbReference type="SMR" id="A8ZXB8"/>
<dbReference type="STRING" id="96561.Dole_2694"/>
<dbReference type="KEGG" id="dol:Dole_2694"/>
<dbReference type="eggNOG" id="COG1219">
    <property type="taxonomic scope" value="Bacteria"/>
</dbReference>
<dbReference type="HOGENOM" id="CLU_014218_8_2_7"/>
<dbReference type="OrthoDB" id="9804062at2"/>
<dbReference type="Proteomes" id="UP000008561">
    <property type="component" value="Chromosome"/>
</dbReference>
<dbReference type="GO" id="GO:0009376">
    <property type="term" value="C:HslUV protease complex"/>
    <property type="evidence" value="ECO:0007669"/>
    <property type="project" value="TreeGrafter"/>
</dbReference>
<dbReference type="GO" id="GO:0005524">
    <property type="term" value="F:ATP binding"/>
    <property type="evidence" value="ECO:0007669"/>
    <property type="project" value="UniProtKB-UniRule"/>
</dbReference>
<dbReference type="GO" id="GO:0016887">
    <property type="term" value="F:ATP hydrolysis activity"/>
    <property type="evidence" value="ECO:0007669"/>
    <property type="project" value="InterPro"/>
</dbReference>
<dbReference type="GO" id="GO:0140662">
    <property type="term" value="F:ATP-dependent protein folding chaperone"/>
    <property type="evidence" value="ECO:0007669"/>
    <property type="project" value="InterPro"/>
</dbReference>
<dbReference type="GO" id="GO:0046983">
    <property type="term" value="F:protein dimerization activity"/>
    <property type="evidence" value="ECO:0007669"/>
    <property type="project" value="InterPro"/>
</dbReference>
<dbReference type="GO" id="GO:0051082">
    <property type="term" value="F:unfolded protein binding"/>
    <property type="evidence" value="ECO:0007669"/>
    <property type="project" value="UniProtKB-UniRule"/>
</dbReference>
<dbReference type="GO" id="GO:0008270">
    <property type="term" value="F:zinc ion binding"/>
    <property type="evidence" value="ECO:0007669"/>
    <property type="project" value="InterPro"/>
</dbReference>
<dbReference type="GO" id="GO:0051301">
    <property type="term" value="P:cell division"/>
    <property type="evidence" value="ECO:0007669"/>
    <property type="project" value="TreeGrafter"/>
</dbReference>
<dbReference type="GO" id="GO:0051603">
    <property type="term" value="P:proteolysis involved in protein catabolic process"/>
    <property type="evidence" value="ECO:0007669"/>
    <property type="project" value="TreeGrafter"/>
</dbReference>
<dbReference type="CDD" id="cd19497">
    <property type="entry name" value="RecA-like_ClpX"/>
    <property type="match status" value="1"/>
</dbReference>
<dbReference type="FunFam" id="1.10.8.60:FF:000002">
    <property type="entry name" value="ATP-dependent Clp protease ATP-binding subunit ClpX"/>
    <property type="match status" value="1"/>
</dbReference>
<dbReference type="FunFam" id="3.40.50.300:FF:000005">
    <property type="entry name" value="ATP-dependent Clp protease ATP-binding subunit ClpX"/>
    <property type="match status" value="1"/>
</dbReference>
<dbReference type="Gene3D" id="1.10.8.60">
    <property type="match status" value="1"/>
</dbReference>
<dbReference type="Gene3D" id="6.20.220.10">
    <property type="entry name" value="ClpX chaperone, C4-type zinc finger domain"/>
    <property type="match status" value="1"/>
</dbReference>
<dbReference type="Gene3D" id="3.40.50.300">
    <property type="entry name" value="P-loop containing nucleotide triphosphate hydrolases"/>
    <property type="match status" value="1"/>
</dbReference>
<dbReference type="HAMAP" id="MF_00175">
    <property type="entry name" value="ClpX"/>
    <property type="match status" value="1"/>
</dbReference>
<dbReference type="InterPro" id="IPR003593">
    <property type="entry name" value="AAA+_ATPase"/>
</dbReference>
<dbReference type="InterPro" id="IPR050052">
    <property type="entry name" value="ATP-dep_Clp_protease_ClpX"/>
</dbReference>
<dbReference type="InterPro" id="IPR003959">
    <property type="entry name" value="ATPase_AAA_core"/>
</dbReference>
<dbReference type="InterPro" id="IPR019489">
    <property type="entry name" value="Clp_ATPase_C"/>
</dbReference>
<dbReference type="InterPro" id="IPR004487">
    <property type="entry name" value="Clp_protease_ATP-bd_su_ClpX"/>
</dbReference>
<dbReference type="InterPro" id="IPR046425">
    <property type="entry name" value="ClpX_bact"/>
</dbReference>
<dbReference type="InterPro" id="IPR027417">
    <property type="entry name" value="P-loop_NTPase"/>
</dbReference>
<dbReference type="InterPro" id="IPR010603">
    <property type="entry name" value="Znf_CppX_C4"/>
</dbReference>
<dbReference type="InterPro" id="IPR038366">
    <property type="entry name" value="Znf_CppX_C4_sf"/>
</dbReference>
<dbReference type="NCBIfam" id="TIGR00382">
    <property type="entry name" value="clpX"/>
    <property type="match status" value="1"/>
</dbReference>
<dbReference type="NCBIfam" id="NF003745">
    <property type="entry name" value="PRK05342.1"/>
    <property type="match status" value="1"/>
</dbReference>
<dbReference type="PANTHER" id="PTHR48102:SF7">
    <property type="entry name" value="ATP-DEPENDENT CLP PROTEASE ATP-BINDING SUBUNIT CLPX-LIKE, MITOCHONDRIAL"/>
    <property type="match status" value="1"/>
</dbReference>
<dbReference type="PANTHER" id="PTHR48102">
    <property type="entry name" value="ATP-DEPENDENT CLP PROTEASE ATP-BINDING SUBUNIT CLPX-LIKE, MITOCHONDRIAL-RELATED"/>
    <property type="match status" value="1"/>
</dbReference>
<dbReference type="Pfam" id="PF07724">
    <property type="entry name" value="AAA_2"/>
    <property type="match status" value="1"/>
</dbReference>
<dbReference type="Pfam" id="PF10431">
    <property type="entry name" value="ClpB_D2-small"/>
    <property type="match status" value="1"/>
</dbReference>
<dbReference type="Pfam" id="PF06689">
    <property type="entry name" value="zf-C4_ClpX"/>
    <property type="match status" value="1"/>
</dbReference>
<dbReference type="SMART" id="SM00382">
    <property type="entry name" value="AAA"/>
    <property type="match status" value="1"/>
</dbReference>
<dbReference type="SMART" id="SM01086">
    <property type="entry name" value="ClpB_D2-small"/>
    <property type="match status" value="1"/>
</dbReference>
<dbReference type="SMART" id="SM00994">
    <property type="entry name" value="zf-C4_ClpX"/>
    <property type="match status" value="1"/>
</dbReference>
<dbReference type="SUPFAM" id="SSF57716">
    <property type="entry name" value="Glucocorticoid receptor-like (DNA-binding domain)"/>
    <property type="match status" value="1"/>
</dbReference>
<dbReference type="SUPFAM" id="SSF52540">
    <property type="entry name" value="P-loop containing nucleoside triphosphate hydrolases"/>
    <property type="match status" value="1"/>
</dbReference>
<dbReference type="PROSITE" id="PS51902">
    <property type="entry name" value="CLPX_ZB"/>
    <property type="match status" value="1"/>
</dbReference>
<sequence>MSKRDEVHEKLICSFCGKTQKEVKKLIAGPAVYICDECIHLCGEIIEEEYERETEGTRELLAPKEIKTLLDDYVIEQERAKKALAVAVYNHYKRLDTSVKTSDVEIQKSNILLIGPTGCGKTLLAQTLARFLNVPFTIADATTLTEAGYVGEDVENIILSLLQNADYDVEKAQRGIVYVDEIDKIAQRSDNPSITRDVSGEGVQQALLKIMEGTLASVPPKGGRKHPQQDFVKVDTTNILFICGGTFTGLDKLIERRVGEKTIGFGSKVTGEKDKNYNQSLQLVEPQDLIRFGLIPEFLGRLPIIVTLDELSEESLVKILTEPKNALIKQFQKLFEIEGVNLRFTDSALATVASLAMKRKSGARGLRSILESCMLDLMYEIPSQEGVKECVIGEEVIKKKEAPMLIFEQAKKQKKQA</sequence>
<comment type="function">
    <text evidence="1">ATP-dependent specificity component of the Clp protease. It directs the protease to specific substrates. Can perform chaperone functions in the absence of ClpP.</text>
</comment>
<comment type="subunit">
    <text evidence="1">Component of the ClpX-ClpP complex. Forms a hexameric ring that, in the presence of ATP, binds to fourteen ClpP subunits assembled into a disk-like structure with a central cavity, resembling the structure of eukaryotic proteasomes.</text>
</comment>
<comment type="similarity">
    <text evidence="1">Belongs to the ClpX chaperone family.</text>
</comment>
<gene>
    <name evidence="1" type="primary">clpX</name>
    <name type="ordered locus">Dole_2694</name>
</gene>
<protein>
    <recommendedName>
        <fullName evidence="1">ATP-dependent Clp protease ATP-binding subunit ClpX</fullName>
    </recommendedName>
</protein>
<accession>A8ZXB8</accession>
<proteinExistence type="inferred from homology"/>
<name>CLPX_DESOH</name>
<evidence type="ECO:0000255" key="1">
    <source>
        <dbReference type="HAMAP-Rule" id="MF_00175"/>
    </source>
</evidence>
<evidence type="ECO:0000255" key="2">
    <source>
        <dbReference type="PROSITE-ProRule" id="PRU01250"/>
    </source>
</evidence>
<feature type="chain" id="PRO_1000097950" description="ATP-dependent Clp protease ATP-binding subunit ClpX">
    <location>
        <begin position="1"/>
        <end position="417"/>
    </location>
</feature>
<feature type="domain" description="ClpX-type ZB" evidence="2">
    <location>
        <begin position="1"/>
        <end position="54"/>
    </location>
</feature>
<feature type="binding site" evidence="2">
    <location>
        <position position="13"/>
    </location>
    <ligand>
        <name>Zn(2+)</name>
        <dbReference type="ChEBI" id="CHEBI:29105"/>
    </ligand>
</feature>
<feature type="binding site" evidence="2">
    <location>
        <position position="16"/>
    </location>
    <ligand>
        <name>Zn(2+)</name>
        <dbReference type="ChEBI" id="CHEBI:29105"/>
    </ligand>
</feature>
<feature type="binding site" evidence="2">
    <location>
        <position position="35"/>
    </location>
    <ligand>
        <name>Zn(2+)</name>
        <dbReference type="ChEBI" id="CHEBI:29105"/>
    </ligand>
</feature>
<feature type="binding site" evidence="2">
    <location>
        <position position="38"/>
    </location>
    <ligand>
        <name>Zn(2+)</name>
        <dbReference type="ChEBI" id="CHEBI:29105"/>
    </ligand>
</feature>
<feature type="binding site" evidence="1">
    <location>
        <begin position="116"/>
        <end position="123"/>
    </location>
    <ligand>
        <name>ATP</name>
        <dbReference type="ChEBI" id="CHEBI:30616"/>
    </ligand>
</feature>
<reference key="1">
    <citation type="submission" date="2007-10" db="EMBL/GenBank/DDBJ databases">
        <title>Complete sequence of Desulfococcus oleovorans Hxd3.</title>
        <authorList>
            <consortium name="US DOE Joint Genome Institute"/>
            <person name="Copeland A."/>
            <person name="Lucas S."/>
            <person name="Lapidus A."/>
            <person name="Barry K."/>
            <person name="Glavina del Rio T."/>
            <person name="Dalin E."/>
            <person name="Tice H."/>
            <person name="Pitluck S."/>
            <person name="Kiss H."/>
            <person name="Brettin T."/>
            <person name="Bruce D."/>
            <person name="Detter J.C."/>
            <person name="Han C."/>
            <person name="Schmutz J."/>
            <person name="Larimer F."/>
            <person name="Land M."/>
            <person name="Hauser L."/>
            <person name="Kyrpides N."/>
            <person name="Kim E."/>
            <person name="Wawrik B."/>
            <person name="Richardson P."/>
        </authorList>
    </citation>
    <scope>NUCLEOTIDE SEQUENCE [LARGE SCALE GENOMIC DNA]</scope>
    <source>
        <strain>DSM 6200 / JCM 39069 / Hxd3</strain>
    </source>
</reference>
<organism>
    <name type="scientific">Desulfosudis oleivorans (strain DSM 6200 / JCM 39069 / Hxd3)</name>
    <name type="common">Desulfococcus oleovorans</name>
    <dbReference type="NCBI Taxonomy" id="96561"/>
    <lineage>
        <taxon>Bacteria</taxon>
        <taxon>Pseudomonadati</taxon>
        <taxon>Thermodesulfobacteriota</taxon>
        <taxon>Desulfobacteria</taxon>
        <taxon>Desulfobacterales</taxon>
        <taxon>Desulfosudaceae</taxon>
        <taxon>Desulfosudis</taxon>
    </lineage>
</organism>
<keyword id="KW-0067">ATP-binding</keyword>
<keyword id="KW-0143">Chaperone</keyword>
<keyword id="KW-0479">Metal-binding</keyword>
<keyword id="KW-0547">Nucleotide-binding</keyword>
<keyword id="KW-1185">Reference proteome</keyword>
<keyword id="KW-0862">Zinc</keyword>